<protein>
    <recommendedName>
        <fullName>Vi polysaccharide export protein VexA/TviF</fullName>
    </recommendedName>
</protein>
<organism>
    <name type="scientific">Salmonella typhi</name>
    <dbReference type="NCBI Taxonomy" id="90370"/>
    <lineage>
        <taxon>Bacteria</taxon>
        <taxon>Pseudomonadati</taxon>
        <taxon>Pseudomonadota</taxon>
        <taxon>Gammaproteobacteria</taxon>
        <taxon>Enterobacterales</taxon>
        <taxon>Enterobacteriaceae</taxon>
        <taxon>Salmonella</taxon>
    </lineage>
</organism>
<keyword id="KW-0972">Capsule biogenesis/degradation</keyword>
<keyword id="KW-0998">Cell outer membrane</keyword>
<keyword id="KW-0406">Ion transport</keyword>
<keyword id="KW-0449">Lipoprotein</keyword>
<keyword id="KW-0472">Membrane</keyword>
<keyword id="KW-0564">Palmitate</keyword>
<keyword id="KW-0625">Polysaccharide transport</keyword>
<keyword id="KW-0626">Porin</keyword>
<keyword id="KW-0732">Signal</keyword>
<keyword id="KW-0762">Sugar transport</keyword>
<keyword id="KW-0812">Transmembrane</keyword>
<keyword id="KW-0813">Transport</keyword>
<comment type="function">
    <text>May form an ATP-driven capsule polysaccharide export apparatus, in association with the VexB, VexC and VexD proteins. May function as a membrane anchor for the polysaccharide. Possible porin properties.</text>
</comment>
<comment type="subcellular location">
    <subcellularLocation>
        <location evidence="2">Cell outer membrane</location>
    </subcellularLocation>
</comment>
<comment type="similarity">
    <text evidence="2">Belongs to the BexD/CtrA/VexA family.</text>
</comment>
<accession>Q04976</accession>
<reference key="1">
    <citation type="journal article" date="1993" name="J. Bacteriol.">
        <title>Complete nucleotide sequence and molecular characterization of ViaB region encoding Vi antigen in Salmonella typhi.</title>
        <authorList>
            <person name="Hashimoto Y."/>
            <person name="Li N."/>
            <person name="Yokoyama H."/>
            <person name="Ezaki T."/>
        </authorList>
    </citation>
    <scope>NUCLEOTIDE SEQUENCE [GENOMIC DNA]</scope>
    <source>
        <strain>GIFU 10007</strain>
    </source>
</reference>
<reference key="2">
    <citation type="journal article" date="1993" name="Res. Microbiol.">
        <title>Identification of six open reading frames in the Salmonella enterica subsp. enterica ser. Typhi viaB locus involved in Vi antigen production.</title>
        <authorList>
            <person name="Waxin H."/>
            <person name="Virlogeux I."/>
            <person name="Kolyva S."/>
            <person name="Popoff M.Y."/>
        </authorList>
    </citation>
    <scope>NUCLEOTIDE SEQUENCE [GENOMIC DNA]</scope>
    <source>
        <strain>ATCC 700931 / Ty2</strain>
    </source>
</reference>
<reference key="3">
    <citation type="journal article" date="2001" name="Nature">
        <title>Complete genome sequence of a multiple drug resistant Salmonella enterica serovar Typhi CT18.</title>
        <authorList>
            <person name="Parkhill J."/>
            <person name="Dougan G."/>
            <person name="James K.D."/>
            <person name="Thomson N.R."/>
            <person name="Pickard D."/>
            <person name="Wain J."/>
            <person name="Churcher C.M."/>
            <person name="Mungall K.L."/>
            <person name="Bentley S.D."/>
            <person name="Holden M.T.G."/>
            <person name="Sebaihia M."/>
            <person name="Baker S."/>
            <person name="Basham D."/>
            <person name="Brooks K."/>
            <person name="Chillingworth T."/>
            <person name="Connerton P."/>
            <person name="Cronin A."/>
            <person name="Davis P."/>
            <person name="Davies R.M."/>
            <person name="Dowd L."/>
            <person name="White N."/>
            <person name="Farrar J."/>
            <person name="Feltwell T."/>
            <person name="Hamlin N."/>
            <person name="Haque A."/>
            <person name="Hien T.T."/>
            <person name="Holroyd S."/>
            <person name="Jagels K."/>
            <person name="Krogh A."/>
            <person name="Larsen T.S."/>
            <person name="Leather S."/>
            <person name="Moule S."/>
            <person name="O'Gaora P."/>
            <person name="Parry C."/>
            <person name="Quail M.A."/>
            <person name="Rutherford K.M."/>
            <person name="Simmonds M."/>
            <person name="Skelton J."/>
            <person name="Stevens K."/>
            <person name="Whitehead S."/>
            <person name="Barrell B.G."/>
        </authorList>
    </citation>
    <scope>NUCLEOTIDE SEQUENCE [LARGE SCALE GENOMIC DNA]</scope>
    <source>
        <strain>CT18</strain>
    </source>
</reference>
<reference key="4">
    <citation type="journal article" date="2003" name="J. Bacteriol.">
        <title>Comparative genomics of Salmonella enterica serovar Typhi strains Ty2 and CT18.</title>
        <authorList>
            <person name="Deng W."/>
            <person name="Liou S.-R."/>
            <person name="Plunkett G. III"/>
            <person name="Mayhew G.F."/>
            <person name="Rose D.J."/>
            <person name="Burland V."/>
            <person name="Kodoyianni V."/>
            <person name="Schwartz D.C."/>
            <person name="Blattner F.R."/>
        </authorList>
    </citation>
    <scope>NUCLEOTIDE SEQUENCE [LARGE SCALE GENOMIC DNA]</scope>
    <source>
        <strain>ATCC 700931 / Ty2</strain>
    </source>
</reference>
<gene>
    <name type="primary">vexA</name>
    <name type="synonym">tviF</name>
    <name type="ordered locus">STY4655</name>
    <name type="ordered locus">t4348</name>
</gene>
<feature type="signal peptide" evidence="1">
    <location>
        <begin position="1"/>
        <end position="16"/>
    </location>
</feature>
<feature type="chain" id="PRO_0000022654" description="Vi polysaccharide export protein VexA/TviF">
    <location>
        <begin position="17"/>
        <end position="355"/>
    </location>
</feature>
<feature type="lipid moiety-binding region" description="N-palmitoyl cysteine" evidence="1">
    <location>
        <position position="17"/>
    </location>
</feature>
<feature type="lipid moiety-binding region" description="S-diacylglycerol cysteine" evidence="1">
    <location>
        <position position="17"/>
    </location>
</feature>
<proteinExistence type="inferred from homology"/>
<evidence type="ECO:0000255" key="1">
    <source>
        <dbReference type="PROSITE-ProRule" id="PRU00303"/>
    </source>
</evidence>
<evidence type="ECO:0000305" key="2"/>
<sequence>MKKIIILLTTFFLLSGCTIPRAVFKSSLINQDDPRYNLVEVTPTLKLSAPDTVPKTIVDPVFAANNWHWTSLAKGDVLHITILSSGGAGYLSNNASGDRADFENILVTDSNTVQVPYAGTIPVSGLDVTQLADEIKKRLSRVVLNPQVIVTLTARTGAMVTVEGSGKTGRYPLEQSMNRLSHLLATAVAVENTSTDMMEVHVTRQQHYFTARLSDIYQYPGLDIALQPDDRITLRQVTEYVNVLGAAGVQGKHALVQRHSSVVDALALAKGLNDNLADPQAIFLYKHNEAEQAKQQMRKLNIYHVDMSQPNSVFLAQAIRVDNGDVIYISNASLTDFAKVKAAFDSFLTRGTNSF</sequence>
<dbReference type="EMBL" id="D14156">
    <property type="protein sequence ID" value="BAA03196.1"/>
    <property type="molecule type" value="Genomic_DNA"/>
</dbReference>
<dbReference type="EMBL" id="X67785">
    <property type="protein sequence ID" value="CAA47995.1"/>
    <property type="molecule type" value="Genomic_DNA"/>
</dbReference>
<dbReference type="EMBL" id="AL513382">
    <property type="protein sequence ID" value="CAD06775.1"/>
    <property type="molecule type" value="Genomic_DNA"/>
</dbReference>
<dbReference type="EMBL" id="AE014613">
    <property type="protein sequence ID" value="AAO71801.1"/>
    <property type="molecule type" value="Genomic_DNA"/>
</dbReference>
<dbReference type="PIR" id="F36892">
    <property type="entry name" value="F36892"/>
</dbReference>
<dbReference type="RefSeq" id="NP_458734.1">
    <property type="nucleotide sequence ID" value="NC_003198.1"/>
</dbReference>
<dbReference type="RefSeq" id="WP_000720235.1">
    <property type="nucleotide sequence ID" value="NZ_WSUR01000012.1"/>
</dbReference>
<dbReference type="SMR" id="Q04976"/>
<dbReference type="STRING" id="220341.gene:17588472"/>
<dbReference type="TCDB" id="1.B.18.2.1">
    <property type="family name" value="the outer membrane auxiliary (oma) protein family"/>
</dbReference>
<dbReference type="KEGG" id="stt:t4348"/>
<dbReference type="KEGG" id="sty:STY4655"/>
<dbReference type="PATRIC" id="fig|220341.7.peg.4754"/>
<dbReference type="eggNOG" id="COG1596">
    <property type="taxonomic scope" value="Bacteria"/>
</dbReference>
<dbReference type="HOGENOM" id="CLU_038343_4_0_6"/>
<dbReference type="OMA" id="TKGGQFY"/>
<dbReference type="OrthoDB" id="9808948at2"/>
<dbReference type="PHI-base" id="PHI:9466"/>
<dbReference type="Proteomes" id="UP000000541">
    <property type="component" value="Chromosome"/>
</dbReference>
<dbReference type="Proteomes" id="UP000002670">
    <property type="component" value="Chromosome"/>
</dbReference>
<dbReference type="GO" id="GO:0009279">
    <property type="term" value="C:cell outer membrane"/>
    <property type="evidence" value="ECO:0007669"/>
    <property type="project" value="UniProtKB-SubCell"/>
</dbReference>
<dbReference type="GO" id="GO:0046930">
    <property type="term" value="C:pore complex"/>
    <property type="evidence" value="ECO:0007669"/>
    <property type="project" value="UniProtKB-KW"/>
</dbReference>
<dbReference type="GO" id="GO:0015159">
    <property type="term" value="F:polysaccharide transmembrane transporter activity"/>
    <property type="evidence" value="ECO:0007669"/>
    <property type="project" value="InterPro"/>
</dbReference>
<dbReference type="GO" id="GO:0015288">
    <property type="term" value="F:porin activity"/>
    <property type="evidence" value="ECO:0007669"/>
    <property type="project" value="UniProtKB-KW"/>
</dbReference>
<dbReference type="GO" id="GO:0006811">
    <property type="term" value="P:monoatomic ion transport"/>
    <property type="evidence" value="ECO:0007669"/>
    <property type="project" value="UniProtKB-KW"/>
</dbReference>
<dbReference type="Gene3D" id="3.10.560.10">
    <property type="entry name" value="Outer membrane lipoprotein wza domain like"/>
    <property type="match status" value="2"/>
</dbReference>
<dbReference type="Gene3D" id="3.30.1950.10">
    <property type="entry name" value="wza like domain"/>
    <property type="match status" value="1"/>
</dbReference>
<dbReference type="InterPro" id="IPR049712">
    <property type="entry name" value="Poly_export"/>
</dbReference>
<dbReference type="InterPro" id="IPR003715">
    <property type="entry name" value="Poly_export_N"/>
</dbReference>
<dbReference type="NCBIfam" id="NF011722">
    <property type="entry name" value="PRK15175.1"/>
    <property type="match status" value="1"/>
</dbReference>
<dbReference type="PANTHER" id="PTHR33619">
    <property type="entry name" value="POLYSACCHARIDE EXPORT PROTEIN GFCE-RELATED"/>
    <property type="match status" value="1"/>
</dbReference>
<dbReference type="PANTHER" id="PTHR33619:SF3">
    <property type="entry name" value="POLYSACCHARIDE EXPORT PROTEIN GFCE-RELATED"/>
    <property type="match status" value="1"/>
</dbReference>
<dbReference type="Pfam" id="PF02563">
    <property type="entry name" value="Poly_export"/>
    <property type="match status" value="1"/>
</dbReference>
<dbReference type="PROSITE" id="PS51257">
    <property type="entry name" value="PROKAR_LIPOPROTEIN"/>
    <property type="match status" value="1"/>
</dbReference>
<name>VEXA_SALTI</name>